<reference key="1">
    <citation type="submission" date="2002-12" db="EMBL/GenBank/DDBJ databases">
        <title>Array analysis of subtractive cDNA libraries identifies SGA-1M: a novel breast cancer-associated gene.</title>
        <authorList>
            <person name="Petroziello J.M."/>
            <person name="Westendorf L.E."/>
            <person name="Gordon K.A."/>
            <person name="Yamane A.K."/>
            <person name="Cerveny C.G."/>
            <person name="Wahl A.F."/>
            <person name="Law C.L."/>
        </authorList>
    </citation>
    <scope>NUCLEOTIDE SEQUENCE [MRNA] (ISOFORM 1)</scope>
</reference>
<reference key="2">
    <citation type="journal article" date="2003" name="Oncogene">
        <title>Large-scale identification and characterization of human genes that activate NF-kappaB and MAPK signaling pathways.</title>
        <authorList>
            <person name="Matsuda A."/>
            <person name="Suzuki Y."/>
            <person name="Honda G."/>
            <person name="Muramatsu S."/>
            <person name="Matsuzaki O."/>
            <person name="Nagano Y."/>
            <person name="Doi T."/>
            <person name="Shimotohno K."/>
            <person name="Harada T."/>
            <person name="Nishida E."/>
            <person name="Hayashi H."/>
            <person name="Sugano S."/>
        </authorList>
    </citation>
    <scope>NUCLEOTIDE SEQUENCE [LARGE SCALE MRNA] (ISOFORM 1)</scope>
    <source>
        <tissue>Lung fibroblast</tissue>
    </source>
</reference>
<reference key="3">
    <citation type="journal article" date="2004" name="Nat. Genet.">
        <title>Complete sequencing and characterization of 21,243 full-length human cDNAs.</title>
        <authorList>
            <person name="Ota T."/>
            <person name="Suzuki Y."/>
            <person name="Nishikawa T."/>
            <person name="Otsuki T."/>
            <person name="Sugiyama T."/>
            <person name="Irie R."/>
            <person name="Wakamatsu A."/>
            <person name="Hayashi K."/>
            <person name="Sato H."/>
            <person name="Nagai K."/>
            <person name="Kimura K."/>
            <person name="Makita H."/>
            <person name="Sekine M."/>
            <person name="Obayashi M."/>
            <person name="Nishi T."/>
            <person name="Shibahara T."/>
            <person name="Tanaka T."/>
            <person name="Ishii S."/>
            <person name="Yamamoto J."/>
            <person name="Saito K."/>
            <person name="Kawai Y."/>
            <person name="Isono Y."/>
            <person name="Nakamura Y."/>
            <person name="Nagahari K."/>
            <person name="Murakami K."/>
            <person name="Yasuda T."/>
            <person name="Iwayanagi T."/>
            <person name="Wagatsuma M."/>
            <person name="Shiratori A."/>
            <person name="Sudo H."/>
            <person name="Hosoiri T."/>
            <person name="Kaku Y."/>
            <person name="Kodaira H."/>
            <person name="Kondo H."/>
            <person name="Sugawara M."/>
            <person name="Takahashi M."/>
            <person name="Kanda K."/>
            <person name="Yokoi T."/>
            <person name="Furuya T."/>
            <person name="Kikkawa E."/>
            <person name="Omura Y."/>
            <person name="Abe K."/>
            <person name="Kamihara K."/>
            <person name="Katsuta N."/>
            <person name="Sato K."/>
            <person name="Tanikawa M."/>
            <person name="Yamazaki M."/>
            <person name="Ninomiya K."/>
            <person name="Ishibashi T."/>
            <person name="Yamashita H."/>
            <person name="Murakawa K."/>
            <person name="Fujimori K."/>
            <person name="Tanai H."/>
            <person name="Kimata M."/>
            <person name="Watanabe M."/>
            <person name="Hiraoka S."/>
            <person name="Chiba Y."/>
            <person name="Ishida S."/>
            <person name="Ono Y."/>
            <person name="Takiguchi S."/>
            <person name="Watanabe S."/>
            <person name="Yosida M."/>
            <person name="Hotuta T."/>
            <person name="Kusano J."/>
            <person name="Kanehori K."/>
            <person name="Takahashi-Fujii A."/>
            <person name="Hara H."/>
            <person name="Tanase T.-O."/>
            <person name="Nomura Y."/>
            <person name="Togiya S."/>
            <person name="Komai F."/>
            <person name="Hara R."/>
            <person name="Takeuchi K."/>
            <person name="Arita M."/>
            <person name="Imose N."/>
            <person name="Musashino K."/>
            <person name="Yuuki H."/>
            <person name="Oshima A."/>
            <person name="Sasaki N."/>
            <person name="Aotsuka S."/>
            <person name="Yoshikawa Y."/>
            <person name="Matsunawa H."/>
            <person name="Ichihara T."/>
            <person name="Shiohata N."/>
            <person name="Sano S."/>
            <person name="Moriya S."/>
            <person name="Momiyama H."/>
            <person name="Satoh N."/>
            <person name="Takami S."/>
            <person name="Terashima Y."/>
            <person name="Suzuki O."/>
            <person name="Nakagawa S."/>
            <person name="Senoh A."/>
            <person name="Mizoguchi H."/>
            <person name="Goto Y."/>
            <person name="Shimizu F."/>
            <person name="Wakebe H."/>
            <person name="Hishigaki H."/>
            <person name="Watanabe T."/>
            <person name="Sugiyama A."/>
            <person name="Takemoto M."/>
            <person name="Kawakami B."/>
            <person name="Yamazaki M."/>
            <person name="Watanabe K."/>
            <person name="Kumagai A."/>
            <person name="Itakura S."/>
            <person name="Fukuzumi Y."/>
            <person name="Fujimori Y."/>
            <person name="Komiyama M."/>
            <person name="Tashiro H."/>
            <person name="Tanigami A."/>
            <person name="Fujiwara T."/>
            <person name="Ono T."/>
            <person name="Yamada K."/>
            <person name="Fujii Y."/>
            <person name="Ozaki K."/>
            <person name="Hirao M."/>
            <person name="Ohmori Y."/>
            <person name="Kawabata A."/>
            <person name="Hikiji T."/>
            <person name="Kobatake N."/>
            <person name="Inagaki H."/>
            <person name="Ikema Y."/>
            <person name="Okamoto S."/>
            <person name="Okitani R."/>
            <person name="Kawakami T."/>
            <person name="Noguchi S."/>
            <person name="Itoh T."/>
            <person name="Shigeta K."/>
            <person name="Senba T."/>
            <person name="Matsumura K."/>
            <person name="Nakajima Y."/>
            <person name="Mizuno T."/>
            <person name="Morinaga M."/>
            <person name="Sasaki M."/>
            <person name="Togashi T."/>
            <person name="Oyama M."/>
            <person name="Hata H."/>
            <person name="Watanabe M."/>
            <person name="Komatsu T."/>
            <person name="Mizushima-Sugano J."/>
            <person name="Satoh T."/>
            <person name="Shirai Y."/>
            <person name="Takahashi Y."/>
            <person name="Nakagawa K."/>
            <person name="Okumura K."/>
            <person name="Nagase T."/>
            <person name="Nomura N."/>
            <person name="Kikuchi H."/>
            <person name="Masuho Y."/>
            <person name="Yamashita R."/>
            <person name="Nakai K."/>
            <person name="Yada T."/>
            <person name="Nakamura Y."/>
            <person name="Ohara O."/>
            <person name="Isogai T."/>
            <person name="Sugano S."/>
        </authorList>
    </citation>
    <scope>NUCLEOTIDE SEQUENCE [LARGE SCALE MRNA] (ISOFORMS 1 AND 2)</scope>
    <source>
        <tissue>Embryo</tissue>
    </source>
</reference>
<reference key="4">
    <citation type="journal article" date="2005" name="DNA Res.">
        <title>Signal sequence and keyword trap in silico for selection of full-length human cDNAs encoding secretion or membrane proteins from oligo-capped cDNA libraries.</title>
        <authorList>
            <person name="Otsuki T."/>
            <person name="Ota T."/>
            <person name="Nishikawa T."/>
            <person name="Hayashi K."/>
            <person name="Suzuki Y."/>
            <person name="Yamamoto J."/>
            <person name="Wakamatsu A."/>
            <person name="Kimura K."/>
            <person name="Sakamoto K."/>
            <person name="Hatano N."/>
            <person name="Kawai Y."/>
            <person name="Ishii S."/>
            <person name="Saito K."/>
            <person name="Kojima S."/>
            <person name="Sugiyama T."/>
            <person name="Ono T."/>
            <person name="Okano K."/>
            <person name="Yoshikawa Y."/>
            <person name="Aotsuka S."/>
            <person name="Sasaki N."/>
            <person name="Hattori A."/>
            <person name="Okumura K."/>
            <person name="Nagai K."/>
            <person name="Sugano S."/>
            <person name="Isogai T."/>
        </authorList>
    </citation>
    <scope>NUCLEOTIDE SEQUENCE [LARGE SCALE MRNA] (ISOFORM 1)</scope>
    <source>
        <tissue>Embryo</tissue>
    </source>
</reference>
<reference key="5">
    <citation type="submission" date="2005-09" db="EMBL/GenBank/DDBJ databases">
        <authorList>
            <person name="Mural R.J."/>
            <person name="Istrail S."/>
            <person name="Sutton G.G."/>
            <person name="Florea L."/>
            <person name="Halpern A.L."/>
            <person name="Mobarry C.M."/>
            <person name="Lippert R."/>
            <person name="Walenz B."/>
            <person name="Shatkay H."/>
            <person name="Dew I."/>
            <person name="Miller J.R."/>
            <person name="Flanigan M.J."/>
            <person name="Edwards N.J."/>
            <person name="Bolanos R."/>
            <person name="Fasulo D."/>
            <person name="Halldorsson B.V."/>
            <person name="Hannenhalli S."/>
            <person name="Turner R."/>
            <person name="Yooseph S."/>
            <person name="Lu F."/>
            <person name="Nusskern D.R."/>
            <person name="Shue B.C."/>
            <person name="Zheng X.H."/>
            <person name="Zhong F."/>
            <person name="Delcher A.L."/>
            <person name="Huson D.H."/>
            <person name="Kravitz S.A."/>
            <person name="Mouchard L."/>
            <person name="Reinert K."/>
            <person name="Remington K.A."/>
            <person name="Clark A.G."/>
            <person name="Waterman M.S."/>
            <person name="Eichler E.E."/>
            <person name="Adams M.D."/>
            <person name="Hunkapiller M.W."/>
            <person name="Myers E.W."/>
            <person name="Venter J.C."/>
        </authorList>
    </citation>
    <scope>NUCLEOTIDE SEQUENCE [LARGE SCALE GENOMIC DNA]</scope>
</reference>
<reference key="6">
    <citation type="journal article" date="2004" name="Genome Res.">
        <title>The status, quality, and expansion of the NIH full-length cDNA project: the Mammalian Gene Collection (MGC).</title>
        <authorList>
            <consortium name="The MGC Project Team"/>
        </authorList>
    </citation>
    <scope>NUCLEOTIDE SEQUENCE [LARGE SCALE MRNA] (ISOFORM 1)</scope>
    <source>
        <tissue>Brain</tissue>
    </source>
</reference>
<reference key="7">
    <citation type="journal article" date="2007" name="BMC Genomics">
        <title>The full-ORF clone resource of the German cDNA consortium.</title>
        <authorList>
            <person name="Bechtel S."/>
            <person name="Rosenfelder H."/>
            <person name="Duda A."/>
            <person name="Schmidt C.P."/>
            <person name="Ernst U."/>
            <person name="Wellenreuther R."/>
            <person name="Mehrle A."/>
            <person name="Schuster C."/>
            <person name="Bahr A."/>
            <person name="Bloecker H."/>
            <person name="Heubner D."/>
            <person name="Hoerlein A."/>
            <person name="Michel G."/>
            <person name="Wedler H."/>
            <person name="Koehrer K."/>
            <person name="Ottenwaelder B."/>
            <person name="Poustka A."/>
            <person name="Wiemann S."/>
            <person name="Schupp I."/>
        </authorList>
    </citation>
    <scope>NUCLEOTIDE SEQUENCE [LARGE SCALE MRNA] OF 102-221 (ISOFORM 1)</scope>
    <source>
        <tissue>Stomach</tissue>
    </source>
</reference>
<reference key="8">
    <citation type="journal article" date="2002" name="J. Biol. Chem.">
        <title>N4WBP5, a potential target for ubiquitination by the Nedd4 family of proteins, is a novel Golgi-associated protein.</title>
        <authorList>
            <person name="Harvey K.F."/>
            <person name="Shearwin-Whyatt L.M."/>
            <person name="Fotia A."/>
            <person name="Parton R.G."/>
            <person name="Kumar S."/>
        </authorList>
    </citation>
    <scope>TISSUE SPECIFICITY</scope>
</reference>
<reference key="9">
    <citation type="journal article" date="2008" name="Blood">
        <title>Regulation of the divalent metal ion transporter DMT1 and iron homeostasis by a ubiquitin-dependent mechanism involving Ndfips and WWP2.</title>
        <authorList>
            <person name="Foot N.J."/>
            <person name="Dalton H.E."/>
            <person name="Shearwin-Whyatt L.M."/>
            <person name="Dorstyn L."/>
            <person name="Tan S.S."/>
            <person name="Yang B."/>
            <person name="Kumar S."/>
        </authorList>
    </citation>
    <scope>SUBCELLULAR LOCATION</scope>
    <scope>INTERACTION WITH SLC11A2 AND WWP2</scope>
</reference>
<reference key="10">
    <citation type="journal article" date="2008" name="J. Biol. Chem.">
        <title>Nedd4 family-interacting protein 1 (Ndfip1) is required for the exosomal secretion of Nedd4 family proteins.</title>
        <authorList>
            <person name="Putz U."/>
            <person name="Howitt J."/>
            <person name="Lackovic J."/>
            <person name="Foot N."/>
            <person name="Kumar S."/>
            <person name="Silke J."/>
            <person name="Tan S.S."/>
        </authorList>
    </citation>
    <scope>SUBCELLULAR LOCATION</scope>
</reference>
<reference key="11">
    <citation type="journal article" date="2009" name="EMBO Rep.">
        <title>Control of the activity of WW-HECT domain E3 ubiquitin ligases by NDFIP proteins.</title>
        <authorList>
            <person name="Mund T."/>
            <person name="Pelham H.R."/>
        </authorList>
    </citation>
    <scope>FUNCTION</scope>
    <scope>UBIQUITINATION</scope>
</reference>
<reference key="12">
    <citation type="journal article" date="2009" name="Proc. Natl. Acad. Sci. U.S.A.">
        <title>Divalent metal transporter 1 (DMT1) regulation by Ndfip1 prevents metal toxicity in human neurons.</title>
        <authorList>
            <person name="Howitt J."/>
            <person name="Putz U."/>
            <person name="Lackovic J."/>
            <person name="Doan A."/>
            <person name="Dorstyn L."/>
            <person name="Cheng H."/>
            <person name="Yang B."/>
            <person name="Chan-Ling T."/>
            <person name="Silke J."/>
            <person name="Kumar S."/>
            <person name="Tan S.S."/>
        </authorList>
    </citation>
    <scope>FUNCTION</scope>
    <scope>INTERACTION WITH SLC11A2 AND NEDD4L</scope>
    <scope>INDUCTION BY COBALT AND IRON</scope>
</reference>
<reference key="13">
    <citation type="journal article" date="2010" name="Proc. Natl. Acad. Sci. U.S.A.">
        <title>Regulation of PTEN/Akt and MAP kinase signaling pathways by the ubiquitin ligase activators Ndfip1 and Ndfip2.</title>
        <authorList>
            <person name="Mund T."/>
            <person name="Pelham H.R."/>
        </authorList>
    </citation>
    <scope>FUNCTION</scope>
    <scope>INTERACTION WITH NDFIP2; NEDD4 AND PTEN</scope>
    <scope>SUBCELLULAR LOCATION</scope>
    <scope>PHOSPHORYLATION</scope>
    <scope>MUTAGENESIS OF 41-PRO-TYR-42; 66-SER-TYR-67 AND 75-SER-TYR-76</scope>
</reference>
<reference key="14">
    <citation type="journal article" date="2012" name="J. Immunol.">
        <title>Ndfip1 negatively regulates RIG-I-dependent immune signaling by enhancing E3 ligase Smurf1-mediated MAVS degradation.</title>
        <authorList>
            <person name="Wang Y."/>
            <person name="Tong X."/>
            <person name="Ye X."/>
        </authorList>
    </citation>
    <scope>FUNCTION</scope>
    <scope>INTERACTION WITH MAVS</scope>
</reference>
<reference key="15">
    <citation type="journal article" date="2012" name="Mol. Cell. Proteomics">
        <title>Comparative large-scale characterisation of plant vs. mammal proteins reveals similar and idiosyncratic N-alpha acetylation features.</title>
        <authorList>
            <person name="Bienvenut W.V."/>
            <person name="Sumpton D."/>
            <person name="Martinez A."/>
            <person name="Lilla S."/>
            <person name="Espagne C."/>
            <person name="Meinnel T."/>
            <person name="Giglione C."/>
        </authorList>
    </citation>
    <scope>ACETYLATION [LARGE SCALE ANALYSIS] AT ALA-2</scope>
    <scope>CLEAVAGE OF INITIATOR METHIONINE [LARGE SCALE ANALYSIS]</scope>
    <scope>IDENTIFICATION BY MASS SPECTROMETRY [LARGE SCALE ANALYSIS]</scope>
</reference>
<reference key="16">
    <citation type="journal article" date="2015" name="Biochem. Biophys. Res. Commun.">
        <title>Nedd4 family interacting protein 1 (Ndfip1) promotes death of pancreatic beta cells.</title>
        <authorList>
            <person name="Beck A."/>
            <person name="Shatz-Azoulay H."/>
            <person name="Vinik Y."/>
            <person name="Isaac R."/>
            <person name="Boura-Halfon S."/>
            <person name="Zick Y."/>
        </authorList>
    </citation>
    <scope>FUNCTION</scope>
</reference>
<reference key="17">
    <citation type="journal article" date="2015" name="Biochem. J.">
        <title>Regulation of the human ether-a-go-go-related gene (hERG) potassium channel by Nedd4 family interacting proteins (Ndfips).</title>
        <authorList>
            <person name="Kang Y."/>
            <person name="Guo J."/>
            <person name="Yang T."/>
            <person name="Li W."/>
            <person name="Zhang S."/>
        </authorList>
    </citation>
    <scope>FUNCTION</scope>
    <scope>SUBCELLULAR LOCATION</scope>
    <scope>INTERACTION WITH KCNH2 AND NEDD4L</scope>
</reference>
<reference key="18">
    <citation type="journal article" date="2015" name="J. Biol. Chem.">
        <title>Nedd4 family interacting protein 1 (Ndfip1) is required for ubiquitination and nuclear trafficking of BRCA1-associated ATM activator 1 (BRAT1) during the DNA damage response.</title>
        <authorList>
            <person name="Low L.H."/>
            <person name="Chow Y.L."/>
            <person name="Li Y."/>
            <person name="Goh C.P."/>
            <person name="Putz U."/>
            <person name="Silke J."/>
            <person name="Ouchi T."/>
            <person name="Howitt J."/>
            <person name="Tan S.S."/>
        </authorList>
    </citation>
    <scope>FUNCTION</scope>
    <scope>INTERACTION WITH BRAT1</scope>
</reference>
<reference key="19">
    <citation type="journal article" date="2015" name="J. Immunol.">
        <title>Ndfip1 regulates itch ligase activity and airway inflammation via UbcH7.</title>
        <authorList>
            <person name="Kathania M."/>
            <person name="Zeng M."/>
            <person name="Yadav V.N."/>
            <person name="Moghaddam S.J."/>
            <person name="Yang B."/>
            <person name="Venuprasad K."/>
        </authorList>
    </citation>
    <scope>INTERACTION WITH UBE2L3</scope>
</reference>
<reference key="20">
    <citation type="journal article" date="2015" name="J. Mol. Cell Biol.">
        <title>Ndfip1 represses cell proliferation by controlling Pten localization and signaling specificity.</title>
        <authorList>
            <person name="Howitt J."/>
            <person name="Low L.H."/>
            <person name="Putz U."/>
            <person name="Doan A."/>
            <person name="Lackovic J."/>
            <person name="Goh C.P."/>
            <person name="Gunnersen J."/>
            <person name="Silke J."/>
            <person name="Tan S.S."/>
        </authorList>
    </citation>
    <scope>FUNCTION</scope>
    <scope>INTERACTION WITH PTEN</scope>
</reference>
<proteinExistence type="evidence at protein level"/>
<comment type="function">
    <text evidence="2 8 9 10 11 12 14 15 16">Activates HECT domain-containing E3 ubiquitin-protein ligases, including NEDD4 and ITCH, and consequently modulates the stability of their targets. As a result, controls many cellular processes. Prevents chronic T-helper cell-mediated inflammation by activating ITCH and thus controlling JUNB degradation (By similarity). Promotes pancreatic beta cell death through degradation of JUNB and inhibition of the unfolded protein response, leading to reduction of insulin secretion (PubMed:26319551). Restricts the production of pro-inflammatory cytokines in effector Th17 T-cells by promoting ITCH-mediated ubiquitination and degradation of RORC (By similarity). Together with NDFIP2, limits the cytokine signaling and expansion of effector Th2 T-cells by promoting degradation of JAK1, probably by ITCH- and NEDD4L-mediated ubiquitination (By similarity). Regulates peripheral T-cell tolerance to self and foreign antigens, forcing the exit of naive CD4+ T-cells from the cell cycle before they become effector T-cells (By similarity). Negatively regulates RLR-mediated antiviral response by promoting SMURF1-mediated ubiquitination and subsequent degradation of MAVS (PubMed:23087404). Negatively regulates KCNH2 potassium channel activity by decreasing its cell-surface expression and interfering with channel maturation through recruitment of NEDD4L to the Golgi apparatus where it mediates KCNH2 degradation (PubMed:26363003). In cortical neurons, mediates the ubiquitination of the divalent metal transporter SLC11A2/DMT1 by NEDD4L, leading to its down-regulation and protection of the cells from cobalt and iron toxicity (PubMed:19706893). Important for normal development of dendrites and dendritic spines in cortex (By similarity). Enhances the ubiquitination of BRAT1 mediated by: NEDD4, NEDD4L and ITCH and is required for the nuclear localization of ubiquitinated BRAT1 (PubMed:25631046). Enhances the ITCH-mediated ubiquitination of MAP3K7 by recruiting E2 ubiquitin-conjugating enzyme UBE2L3 to ITCH (By similarity). Modulates EGFR signaling through multiple pathways. In particular, may regulate the ratio of AKT1-to-MAPK8 signaling in response to EGF, acting on AKT1 probably through PTEN destabilization and on MAPK8 through ITCH-dependent MAP2K4 inactivation. As a result, may control cell growth rate (PubMed:20534535). Inhibits cell proliferation by promoting PTEN nuclear localization and changing its signaling specificity (PubMed:25801959).</text>
</comment>
<comment type="subunit">
    <text evidence="2 6 9 10 11 12 13 14 16">Forms heterodimers with NDFIP2 (PubMed:20534535). Interacts with several E3 ubiquitin-protein ligases, including ITCH, NEDD4, NEDD4L and WWP2 (PubMed:18776082, PubMed:19706893, PubMed:26363003). The interaction with NEDD4, NEDD4L and ITCH leads to relocalization of these proteins to exosomes and eventually to exosomal secretion (By similarity). Interacts with U2SURP (By similarity). Interacts with SLC11A2/DMT1 (PubMed:18776082, PubMed:19706893). Interacts with PTEN (PubMed:20534535, PubMed:25801959). May interact with phosphorylated EGFR (PubMed:20534535). Interacts with BRAT1 (PubMed:25631046). Interacts with KCNH2 (PubMed:26363003). Interacts with MAVS (PubMed:23087404). Part of a complex containing ITCH, NDFIP1 and MAP3K7 (By similarity). Interacts (via N-terminus) with UBE2L3; the interaction mediates recruitment of UBE2L3 to ITCH (PubMed:25632008).</text>
</comment>
<comment type="interaction">
    <interactant intactId="EBI-11732799">
        <id>Q9BT67</id>
    </interactant>
    <interactant intactId="EBI-4319335">
        <id>P49281</id>
        <label>SLC11A2</label>
    </interactant>
    <organismsDiffer>false</organismsDiffer>
    <experiments>2</experiments>
</comment>
<comment type="interaction">
    <interactant intactId="EBI-11732799">
        <id>Q9BT67</id>
    </interactant>
    <interactant intactId="EBI-1224427">
        <id>P07919</id>
        <label>UQCRH</label>
    </interactant>
    <organismsDiffer>false</organismsDiffer>
    <experiments>3</experiments>
</comment>
<comment type="subcellular location">
    <subcellularLocation>
        <location evidence="10">Endosome membrane</location>
        <topology evidence="10">Multi-pass membrane protein</topology>
    </subcellularLocation>
    <subcellularLocation>
        <location evidence="16">Golgi apparatus membrane</location>
    </subcellularLocation>
    <subcellularLocation>
        <location evidence="2">Synapse</location>
        <location evidence="2">Synaptosome</location>
    </subcellularLocation>
    <subcellularLocation>
        <location evidence="1">Cell projection</location>
        <location evidence="1">Dendrite</location>
    </subcellularLocation>
    <subcellularLocation>
        <location evidence="7">Secreted</location>
    </subcellularLocation>
    <text>Detected in exosomes and secreted via the exosomal pathway (PubMed:18819914).</text>
</comment>
<comment type="alternative products">
    <event type="alternative splicing"/>
    <isoform>
        <id>Q9BT67-1</id>
        <name>1</name>
        <sequence type="displayed"/>
    </isoform>
    <isoform>
        <id>Q9BT67-2</id>
        <name>2</name>
        <sequence type="described" ref="VSP_016474 VSP_016475"/>
    </isoform>
</comment>
<comment type="tissue specificity">
    <text evidence="5">Widely expressed. Higher levels are detected in cerebellum, pituitary, thalamus, kidney, liver, testis, salivary glands and placenta. Also expressed in fetal brain, kidney and lung.</text>
</comment>
<comment type="induction">
    <text evidence="9">Increased protein expression in neuronal cells in response to Co(2+) or Fe(2+) ions.</text>
</comment>
<comment type="domain">
    <text evidence="11">The PPxY motifs are required for E3 ubiquitin-protein ligase binding and activation and for ubiquitination.</text>
</comment>
<comment type="PTM">
    <text evidence="8">Ubiquitinated by NEDD4 and ITCH; mono-, di- and polyubiquitinated forms are detected. Ubiquitination regulates its degradation.</text>
</comment>
<comment type="PTM">
    <text evidence="10">Undergoes transient tyrosine phosphorylation following EGF stimulation, most probably by catalyzed by SRC. Phosphorylation SRC is enhanced in the presence of NDFIP2 which may act as a scaffold to recruit SRC to NDFIP1.</text>
</comment>
<evidence type="ECO:0000250" key="1">
    <source>
        <dbReference type="UniProtKB" id="Q5U2S1"/>
    </source>
</evidence>
<evidence type="ECO:0000250" key="2">
    <source>
        <dbReference type="UniProtKB" id="Q8R0W6"/>
    </source>
</evidence>
<evidence type="ECO:0000255" key="3"/>
<evidence type="ECO:0000256" key="4">
    <source>
        <dbReference type="SAM" id="MobiDB-lite"/>
    </source>
</evidence>
<evidence type="ECO:0000269" key="5">
    <source>
    </source>
</evidence>
<evidence type="ECO:0000269" key="6">
    <source>
    </source>
</evidence>
<evidence type="ECO:0000269" key="7">
    <source>
    </source>
</evidence>
<evidence type="ECO:0000269" key="8">
    <source>
    </source>
</evidence>
<evidence type="ECO:0000269" key="9">
    <source>
    </source>
</evidence>
<evidence type="ECO:0000269" key="10">
    <source>
    </source>
</evidence>
<evidence type="ECO:0000269" key="11">
    <source>
    </source>
</evidence>
<evidence type="ECO:0000269" key="12">
    <source>
    </source>
</evidence>
<evidence type="ECO:0000269" key="13">
    <source>
    </source>
</evidence>
<evidence type="ECO:0000269" key="14">
    <source>
    </source>
</evidence>
<evidence type="ECO:0000269" key="15">
    <source>
    </source>
</evidence>
<evidence type="ECO:0000269" key="16">
    <source>
    </source>
</evidence>
<evidence type="ECO:0000303" key="17">
    <source>
    </source>
</evidence>
<evidence type="ECO:0000305" key="18"/>
<evidence type="ECO:0007744" key="19">
    <source>
    </source>
</evidence>
<gene>
    <name type="primary">NDFIP1</name>
    <name type="synonym">N4WBP5</name>
    <name type="ORF">PSEC0192</name>
    <name type="ORF">PSEC0223</name>
</gene>
<protein>
    <recommendedName>
        <fullName>NEDD4 family-interacting protein 1</fullName>
    </recommendedName>
    <alternativeName>
        <fullName>Breast cancer-associated protein SGA-1M</fullName>
    </alternativeName>
    <alternativeName>
        <fullName>NEDD4 WW domain-binding protein 5</fullName>
    </alternativeName>
    <alternativeName>
        <fullName>Putative MAPK-activating protein PM13</fullName>
    </alternativeName>
    <alternativeName>
        <fullName>Putative NF-kappa-B-activating protein 164</fullName>
    </alternativeName>
    <alternativeName>
        <fullName>Putative NFKB and MAPK-activating protein</fullName>
    </alternativeName>
</protein>
<keyword id="KW-0007">Acetylation</keyword>
<keyword id="KW-0025">Alternative splicing</keyword>
<keyword id="KW-0966">Cell projection</keyword>
<keyword id="KW-0967">Endosome</keyword>
<keyword id="KW-0333">Golgi apparatus</keyword>
<keyword id="KW-0472">Membrane</keyword>
<keyword id="KW-1267">Proteomics identification</keyword>
<keyword id="KW-1185">Reference proteome</keyword>
<keyword id="KW-0677">Repeat</keyword>
<keyword id="KW-0964">Secreted</keyword>
<keyword id="KW-0770">Synapse</keyword>
<keyword id="KW-0771">Synaptosome</keyword>
<keyword id="KW-0812">Transmembrane</keyword>
<keyword id="KW-1133">Transmembrane helix</keyword>
<keyword id="KW-0832">Ubl conjugation</keyword>
<sequence>MALALAALAAVEPACGSRYQQLQNEEESGEPEQAAGDAPPPYSSISAESAAYFDYKDESGFPKPPSYNVATTLPSYDEAERTKAEATIPLVPGRDEDFVGRDDFDDADQLRIGNDGIFMLTFFMAFLFNWIGFFLSFCLTTSAAGRYGAISGFGLSLIKWILIVRFSTYFPGYFDGQYWLWWVFLVLGFLLFLRGFINYAKVRKMPETFSNLPRTRVLFIY</sequence>
<accession>Q9BT67</accession>
<accession>B2RDB8</accession>
<accession>D3DQF0</accession>
<accession>Q658T8</accession>
<accession>Q8N2E3</accession>
<accession>Q8N2F9</accession>
<name>NFIP1_HUMAN</name>
<organism>
    <name type="scientific">Homo sapiens</name>
    <name type="common">Human</name>
    <dbReference type="NCBI Taxonomy" id="9606"/>
    <lineage>
        <taxon>Eukaryota</taxon>
        <taxon>Metazoa</taxon>
        <taxon>Chordata</taxon>
        <taxon>Craniata</taxon>
        <taxon>Vertebrata</taxon>
        <taxon>Euteleostomi</taxon>
        <taxon>Mammalia</taxon>
        <taxon>Eutheria</taxon>
        <taxon>Euarchontoglires</taxon>
        <taxon>Primates</taxon>
        <taxon>Haplorrhini</taxon>
        <taxon>Catarrhini</taxon>
        <taxon>Hominidae</taxon>
        <taxon>Homo</taxon>
    </lineage>
</organism>
<feature type="initiator methionine" description="Removed" evidence="19">
    <location>
        <position position="1"/>
    </location>
</feature>
<feature type="chain" id="PRO_0000076269" description="NEDD4 family-interacting protein 1">
    <location>
        <begin position="2"/>
        <end position="221"/>
    </location>
</feature>
<feature type="topological domain" description="Cytoplasmic" evidence="3">
    <location>
        <begin position="2"/>
        <end position="116"/>
    </location>
</feature>
<feature type="transmembrane region" description="Helical" evidence="3">
    <location>
        <begin position="117"/>
        <end position="137"/>
    </location>
</feature>
<feature type="topological domain" description="Extracellular" evidence="3">
    <location>
        <begin position="138"/>
        <end position="143"/>
    </location>
</feature>
<feature type="transmembrane region" description="Helical" evidence="3">
    <location>
        <begin position="144"/>
        <end position="164"/>
    </location>
</feature>
<feature type="topological domain" description="Cytoplasmic" evidence="3">
    <location>
        <begin position="165"/>
        <end position="172"/>
    </location>
</feature>
<feature type="transmembrane region" description="Helical" evidence="3">
    <location>
        <begin position="173"/>
        <end position="193"/>
    </location>
</feature>
<feature type="topological domain" description="Extracellular" evidence="3">
    <location>
        <begin position="194"/>
        <end position="221"/>
    </location>
</feature>
<feature type="region of interest" description="Interaction with UBE2L3" evidence="2">
    <location>
        <begin position="2"/>
        <end position="41"/>
    </location>
</feature>
<feature type="region of interest" description="Disordered" evidence="4">
    <location>
        <begin position="18"/>
        <end position="45"/>
    </location>
</feature>
<feature type="region of interest" description="Interaction with ITCH" evidence="2">
    <location>
        <begin position="42"/>
        <end position="76"/>
    </location>
</feature>
<feature type="short sequence motif" description="PPxY motif 1">
    <location>
        <begin position="39"/>
        <end position="42"/>
    </location>
</feature>
<feature type="short sequence motif" description="PPxY motif 2">
    <location>
        <begin position="64"/>
        <end position="67"/>
    </location>
</feature>
<feature type="short sequence motif" description="PPxY motif 3">
    <location>
        <begin position="74"/>
        <end position="76"/>
    </location>
</feature>
<feature type="modified residue" description="N-acetylalanine" evidence="19">
    <location>
        <position position="2"/>
    </location>
</feature>
<feature type="splice variant" id="VSP_016474" description="In isoform 2." evidence="17">
    <original>YDEAERTKAEATIPLVPGRDEDFVGRDDFDDADQLRIGNDGIFMLTFFMAFLFNWIGFFLSFCLTTSAAGRYGAISGF</original>
    <variation>CFYDISHLIFFIFYLRNMKKKYTKMVKLLHKSAPAQSDSCKCPFICCVCISRISIGSRSGYQYIMHRSVGCLKAKQEN</variation>
    <location>
        <begin position="76"/>
        <end position="153"/>
    </location>
</feature>
<feature type="splice variant" id="VSP_016475" description="In isoform 2." evidence="17">
    <location>
        <begin position="154"/>
        <end position="221"/>
    </location>
</feature>
<feature type="mutagenesis site" description="Loss of phosphorylation; when associated with 66-S-Y-67 and 75-S-Y-76. Greatly decreases NEDD4-binding; when associated with 66-S-Y-67 and 75-S-Y-76. No effect on PTEN-binding; when associated with 66-S-Y-67 and 75-S-Y-76." evidence="10">
    <original>PY</original>
    <variation>AG</variation>
    <location>
        <begin position="41"/>
        <end position="42"/>
    </location>
</feature>
<feature type="mutagenesis site" description="Loss of phosphorylation; when associated with 41-P-Y-42 and 75-S-Y-76. Greatly decreases NEDD4-binding; when associated with 41-P-Y-42 and 75-S-Y-76. No effect on PTEN-binding; when associated with 41-P-Y-42 and 75-S-Y-76." evidence="10">
    <original>SY</original>
    <variation>AG</variation>
    <location>
        <begin position="66"/>
        <end position="67"/>
    </location>
</feature>
<feature type="mutagenesis site" description="Loss of phosphorylation; when associated with 41-P-Y-42 and 66-S-Y-67. Greatly decreases NEDD4-binding; when associated with 41-P-Y-42 and 66-S-Y-67. No effect on PTEN-binding; when associated with 41-P-Y-42 and 66-S-Y-67." evidence="10">
    <original>SY</original>
    <variation>AG</variation>
    <location>
        <begin position="75"/>
        <end position="76"/>
    </location>
</feature>
<feature type="sequence conflict" description="In Ref. 4; BAC11670." evidence="18" ref="4">
    <original>Q</original>
    <variation>W</variation>
    <location>
        <position position="20"/>
    </location>
</feature>
<feature type="sequence conflict" description="In Ref. 4; BAC11670." evidence="18" ref="4">
    <original>F</original>
    <variation>L</variation>
    <location>
        <position position="104"/>
    </location>
</feature>
<dbReference type="EMBL" id="AY192728">
    <property type="protein sequence ID" value="AAP13460.1"/>
    <property type="molecule type" value="mRNA"/>
</dbReference>
<dbReference type="EMBL" id="AB097010">
    <property type="protein sequence ID" value="BAC77363.1"/>
    <property type="molecule type" value="mRNA"/>
</dbReference>
<dbReference type="EMBL" id="AB097037">
    <property type="protein sequence ID" value="BAC77390.1"/>
    <property type="molecule type" value="mRNA"/>
</dbReference>
<dbReference type="EMBL" id="AK075495">
    <property type="protein sequence ID" value="BAC11652.1"/>
    <property type="molecule type" value="mRNA"/>
</dbReference>
<dbReference type="EMBL" id="AK075524">
    <property type="protein sequence ID" value="BAC11670.1"/>
    <property type="molecule type" value="mRNA"/>
</dbReference>
<dbReference type="EMBL" id="AK315481">
    <property type="protein sequence ID" value="BAG37865.1"/>
    <property type="molecule type" value="mRNA"/>
</dbReference>
<dbReference type="EMBL" id="CH471062">
    <property type="protein sequence ID" value="EAW61888.1"/>
    <property type="molecule type" value="Genomic_DNA"/>
</dbReference>
<dbReference type="EMBL" id="CH471062">
    <property type="protein sequence ID" value="EAW61889.1"/>
    <property type="molecule type" value="Genomic_DNA"/>
</dbReference>
<dbReference type="EMBL" id="BC004317">
    <property type="protein sequence ID" value="AAH04317.1"/>
    <property type="molecule type" value="mRNA"/>
</dbReference>
<dbReference type="EMBL" id="AL832993">
    <property type="protein sequence ID" value="CAH56294.1"/>
    <property type="molecule type" value="mRNA"/>
</dbReference>
<dbReference type="CCDS" id="CCDS4273.1">
    <molecule id="Q9BT67-1"/>
</dbReference>
<dbReference type="RefSeq" id="NP_085048.1">
    <molecule id="Q9BT67-1"/>
    <property type="nucleotide sequence ID" value="NM_030571.4"/>
</dbReference>
<dbReference type="BioGRID" id="123296">
    <property type="interactions" value="116"/>
</dbReference>
<dbReference type="CORUM" id="Q9BT67"/>
<dbReference type="DIP" id="DIP-48958N"/>
<dbReference type="FunCoup" id="Q9BT67">
    <property type="interactions" value="1693"/>
</dbReference>
<dbReference type="IntAct" id="Q9BT67">
    <property type="interactions" value="76"/>
</dbReference>
<dbReference type="MINT" id="Q9BT67"/>
<dbReference type="STRING" id="9606.ENSP00000253814"/>
<dbReference type="iPTMnet" id="Q9BT67"/>
<dbReference type="PhosphoSitePlus" id="Q9BT67"/>
<dbReference type="SwissPalm" id="Q9BT67"/>
<dbReference type="BioMuta" id="NDFIP1"/>
<dbReference type="DMDM" id="74733098"/>
<dbReference type="jPOST" id="Q9BT67"/>
<dbReference type="MassIVE" id="Q9BT67"/>
<dbReference type="PaxDb" id="9606-ENSP00000253814"/>
<dbReference type="PeptideAtlas" id="Q9BT67"/>
<dbReference type="ProteomicsDB" id="78953">
    <molecule id="Q9BT67-1"/>
</dbReference>
<dbReference type="ProteomicsDB" id="78954">
    <molecule id="Q9BT67-2"/>
</dbReference>
<dbReference type="Pumba" id="Q9BT67"/>
<dbReference type="Antibodypedia" id="2434">
    <property type="antibodies" value="200 antibodies from 34 providers"/>
</dbReference>
<dbReference type="DNASU" id="80762"/>
<dbReference type="Ensembl" id="ENST00000253814.6">
    <molecule id="Q9BT67-1"/>
    <property type="protein sequence ID" value="ENSP00000253814.3"/>
    <property type="gene ID" value="ENSG00000131507.11"/>
</dbReference>
<dbReference type="GeneID" id="80762"/>
<dbReference type="KEGG" id="hsa:80762"/>
<dbReference type="MANE-Select" id="ENST00000253814.6">
    <property type="protein sequence ID" value="ENSP00000253814.3"/>
    <property type="RefSeq nucleotide sequence ID" value="NM_030571.4"/>
    <property type="RefSeq protein sequence ID" value="NP_085048.1"/>
</dbReference>
<dbReference type="UCSC" id="uc003lmi.5">
    <molecule id="Q9BT67-1"/>
    <property type="organism name" value="human"/>
</dbReference>
<dbReference type="AGR" id="HGNC:17592"/>
<dbReference type="CTD" id="80762"/>
<dbReference type="DisGeNET" id="80762"/>
<dbReference type="GeneCards" id="NDFIP1"/>
<dbReference type="HGNC" id="HGNC:17592">
    <property type="gene designation" value="NDFIP1"/>
</dbReference>
<dbReference type="HPA" id="ENSG00000131507">
    <property type="expression patterns" value="Low tissue specificity"/>
</dbReference>
<dbReference type="MIM" id="612050">
    <property type="type" value="gene"/>
</dbReference>
<dbReference type="neXtProt" id="NX_Q9BT67"/>
<dbReference type="OpenTargets" id="ENSG00000131507"/>
<dbReference type="PharmGKB" id="PA134943402"/>
<dbReference type="VEuPathDB" id="HostDB:ENSG00000131507"/>
<dbReference type="eggNOG" id="KOG4812">
    <property type="taxonomic scope" value="Eukaryota"/>
</dbReference>
<dbReference type="GeneTree" id="ENSGT00390000012721"/>
<dbReference type="HOGENOM" id="CLU_074980_2_0_1"/>
<dbReference type="InParanoid" id="Q9BT67"/>
<dbReference type="OMA" id="ASMVKWT"/>
<dbReference type="OrthoDB" id="10003116at2759"/>
<dbReference type="PAN-GO" id="Q9BT67">
    <property type="GO annotations" value="7 GO annotations based on evolutionary models"/>
</dbReference>
<dbReference type="PhylomeDB" id="Q9BT67"/>
<dbReference type="TreeFam" id="TF324911"/>
<dbReference type="PathwayCommons" id="Q9BT67"/>
<dbReference type="SignaLink" id="Q9BT67"/>
<dbReference type="SIGNOR" id="Q9BT67"/>
<dbReference type="BioGRID-ORCS" id="80762">
    <property type="hits" value="11 hits in 1155 CRISPR screens"/>
</dbReference>
<dbReference type="ChiTaRS" id="NDFIP1">
    <property type="organism name" value="human"/>
</dbReference>
<dbReference type="GenomeRNAi" id="80762"/>
<dbReference type="Pharos" id="Q9BT67">
    <property type="development level" value="Tbio"/>
</dbReference>
<dbReference type="PRO" id="PR:Q9BT67"/>
<dbReference type="Proteomes" id="UP000005640">
    <property type="component" value="Chromosome 5"/>
</dbReference>
<dbReference type="RNAct" id="Q9BT67">
    <property type="molecule type" value="protein"/>
</dbReference>
<dbReference type="Bgee" id="ENSG00000131507">
    <property type="expression patterns" value="Expressed in Brodmann (1909) area 23 and 211 other cell types or tissues"/>
</dbReference>
<dbReference type="GO" id="GO:0005938">
    <property type="term" value="C:cell cortex"/>
    <property type="evidence" value="ECO:0007669"/>
    <property type="project" value="Ensembl"/>
</dbReference>
<dbReference type="GO" id="GO:0030425">
    <property type="term" value="C:dendrite"/>
    <property type="evidence" value="ECO:0007669"/>
    <property type="project" value="UniProtKB-SubCell"/>
</dbReference>
<dbReference type="GO" id="GO:0005783">
    <property type="term" value="C:endoplasmic reticulum"/>
    <property type="evidence" value="ECO:0000318"/>
    <property type="project" value="GO_Central"/>
</dbReference>
<dbReference type="GO" id="GO:0010008">
    <property type="term" value="C:endosome membrane"/>
    <property type="evidence" value="ECO:0007669"/>
    <property type="project" value="UniProtKB-SubCell"/>
</dbReference>
<dbReference type="GO" id="GO:0005576">
    <property type="term" value="C:extracellular region"/>
    <property type="evidence" value="ECO:0007669"/>
    <property type="project" value="UniProtKB-SubCell"/>
</dbReference>
<dbReference type="GO" id="GO:0005794">
    <property type="term" value="C:Golgi apparatus"/>
    <property type="evidence" value="ECO:0000318"/>
    <property type="project" value="GO_Central"/>
</dbReference>
<dbReference type="GO" id="GO:0000139">
    <property type="term" value="C:Golgi membrane"/>
    <property type="evidence" value="ECO:0007669"/>
    <property type="project" value="UniProtKB-SubCell"/>
</dbReference>
<dbReference type="GO" id="GO:0048471">
    <property type="term" value="C:perinuclear region of cytoplasm"/>
    <property type="evidence" value="ECO:0000314"/>
    <property type="project" value="UniProtKB"/>
</dbReference>
<dbReference type="GO" id="GO:0045202">
    <property type="term" value="C:synapse"/>
    <property type="evidence" value="ECO:0007669"/>
    <property type="project" value="UniProtKB-SubCell"/>
</dbReference>
<dbReference type="GO" id="GO:0050699">
    <property type="term" value="F:WW domain binding"/>
    <property type="evidence" value="ECO:0007669"/>
    <property type="project" value="Ensembl"/>
</dbReference>
<dbReference type="GO" id="GO:0035739">
    <property type="term" value="P:CD4-positive, alpha-beta T cell proliferation"/>
    <property type="evidence" value="ECO:0007669"/>
    <property type="project" value="Ensembl"/>
</dbReference>
<dbReference type="GO" id="GO:0006879">
    <property type="term" value="P:intracellular iron ion homeostasis"/>
    <property type="evidence" value="ECO:0000315"/>
    <property type="project" value="UniProtKB"/>
</dbReference>
<dbReference type="GO" id="GO:0030001">
    <property type="term" value="P:metal ion transport"/>
    <property type="evidence" value="ECO:0007669"/>
    <property type="project" value="InterPro"/>
</dbReference>
<dbReference type="GO" id="GO:2000562">
    <property type="term" value="P:negative regulation of CD4-positive, alpha-beta T cell proliferation"/>
    <property type="evidence" value="ECO:0007669"/>
    <property type="project" value="Ensembl"/>
</dbReference>
<dbReference type="GO" id="GO:0010629">
    <property type="term" value="P:negative regulation of gene expression"/>
    <property type="evidence" value="ECO:0000315"/>
    <property type="project" value="UniProtKB"/>
</dbReference>
<dbReference type="GO" id="GO:0050728">
    <property type="term" value="P:negative regulation of inflammatory response"/>
    <property type="evidence" value="ECO:0007669"/>
    <property type="project" value="Ensembl"/>
</dbReference>
<dbReference type="GO" id="GO:0032713">
    <property type="term" value="P:negative regulation of interleukin-4 production"/>
    <property type="evidence" value="ECO:0007669"/>
    <property type="project" value="Ensembl"/>
</dbReference>
<dbReference type="GO" id="GO:0048294">
    <property type="term" value="P:negative regulation of isotype switching to IgE isotypes"/>
    <property type="evidence" value="ECO:0007669"/>
    <property type="project" value="Ensembl"/>
</dbReference>
<dbReference type="GO" id="GO:0051224">
    <property type="term" value="P:negative regulation of protein transport"/>
    <property type="evidence" value="ECO:0000315"/>
    <property type="project" value="UniProtKB"/>
</dbReference>
<dbReference type="GO" id="GO:0032410">
    <property type="term" value="P:negative regulation of transporter activity"/>
    <property type="evidence" value="ECO:0000315"/>
    <property type="project" value="UniProtKB"/>
</dbReference>
<dbReference type="GO" id="GO:0002829">
    <property type="term" value="P:negative regulation of type 2 immune response"/>
    <property type="evidence" value="ECO:0007669"/>
    <property type="project" value="Ensembl"/>
</dbReference>
<dbReference type="GO" id="GO:0043123">
    <property type="term" value="P:positive regulation of canonical NF-kappaB signal transduction"/>
    <property type="evidence" value="ECO:0007001"/>
    <property type="project" value="UniProtKB"/>
</dbReference>
<dbReference type="GO" id="GO:0045732">
    <property type="term" value="P:positive regulation of protein catabolic process"/>
    <property type="evidence" value="ECO:0007669"/>
    <property type="project" value="Ensembl"/>
</dbReference>
<dbReference type="GO" id="GO:0031398">
    <property type="term" value="P:positive regulation of protein ubiquitination"/>
    <property type="evidence" value="ECO:0000314"/>
    <property type="project" value="UniProtKB"/>
</dbReference>
<dbReference type="GO" id="GO:0048302">
    <property type="term" value="P:regulation of isotype switching to IgG isotypes"/>
    <property type="evidence" value="ECO:0007669"/>
    <property type="project" value="Ensembl"/>
</dbReference>
<dbReference type="GO" id="GO:0045619">
    <property type="term" value="P:regulation of lymphocyte differentiation"/>
    <property type="evidence" value="ECO:0007669"/>
    <property type="project" value="Ensembl"/>
</dbReference>
<dbReference type="GO" id="GO:0002761">
    <property type="term" value="P:regulation of myeloid leukocyte differentiation"/>
    <property type="evidence" value="ECO:0007669"/>
    <property type="project" value="Ensembl"/>
</dbReference>
<dbReference type="GO" id="GO:0006511">
    <property type="term" value="P:ubiquitin-dependent protein catabolic process"/>
    <property type="evidence" value="ECO:0000318"/>
    <property type="project" value="GO_Central"/>
</dbReference>
<dbReference type="GO" id="GO:0007034">
    <property type="term" value="P:vacuolar transport"/>
    <property type="evidence" value="ECO:0007669"/>
    <property type="project" value="InterPro"/>
</dbReference>
<dbReference type="CDD" id="cd22305">
    <property type="entry name" value="NDFIP1"/>
    <property type="match status" value="1"/>
</dbReference>
<dbReference type="InterPro" id="IPR019325">
    <property type="entry name" value="NEDD4/Bsd2"/>
</dbReference>
<dbReference type="PANTHER" id="PTHR13396">
    <property type="entry name" value="NEDD4 FAMILY INTERACTING PROTEIN 1/2"/>
    <property type="match status" value="1"/>
</dbReference>
<dbReference type="PANTHER" id="PTHR13396:SF3">
    <property type="entry name" value="NEDD4 FAMILY-INTERACTING PROTEIN 1"/>
    <property type="match status" value="1"/>
</dbReference>
<dbReference type="Pfam" id="PF10176">
    <property type="entry name" value="NEDD4_Bsd2"/>
    <property type="match status" value="2"/>
</dbReference>